<proteinExistence type="inferred from homology"/>
<evidence type="ECO:0000255" key="1">
    <source>
        <dbReference type="HAMAP-Rule" id="MF_03061"/>
    </source>
</evidence>
<evidence type="ECO:0000305" key="2"/>
<name>EFGM_SCLS1</name>
<dbReference type="EMBL" id="CH476633">
    <property type="protein sequence ID" value="EDN93601.1"/>
    <property type="molecule type" value="Genomic_DNA"/>
</dbReference>
<dbReference type="RefSeq" id="XP_001589746.1">
    <property type="nucleotide sequence ID" value="XM_001589696.1"/>
</dbReference>
<dbReference type="SMR" id="A7EVV9"/>
<dbReference type="FunCoup" id="A7EVV9">
    <property type="interactions" value="637"/>
</dbReference>
<dbReference type="STRING" id="665079.A7EVV9"/>
<dbReference type="EnsemblFungi" id="EDN93601">
    <property type="protein sequence ID" value="EDN93601"/>
    <property type="gene ID" value="SS1G_09468"/>
</dbReference>
<dbReference type="GeneID" id="5485697"/>
<dbReference type="KEGG" id="ssl:SS1G_09468"/>
<dbReference type="VEuPathDB" id="FungiDB:sscle_15g104840"/>
<dbReference type="eggNOG" id="KOG0465">
    <property type="taxonomic scope" value="Eukaryota"/>
</dbReference>
<dbReference type="HOGENOM" id="CLU_002794_4_0_1"/>
<dbReference type="InParanoid" id="A7EVV9"/>
<dbReference type="OMA" id="GQFAKVQ"/>
<dbReference type="OrthoDB" id="198619at2759"/>
<dbReference type="UniPathway" id="UPA00345"/>
<dbReference type="Proteomes" id="UP000001312">
    <property type="component" value="Unassembled WGS sequence"/>
</dbReference>
<dbReference type="GO" id="GO:0005739">
    <property type="term" value="C:mitochondrion"/>
    <property type="evidence" value="ECO:0000318"/>
    <property type="project" value="GO_Central"/>
</dbReference>
<dbReference type="GO" id="GO:0005525">
    <property type="term" value="F:GTP binding"/>
    <property type="evidence" value="ECO:0007669"/>
    <property type="project" value="UniProtKB-UniRule"/>
</dbReference>
<dbReference type="GO" id="GO:0003924">
    <property type="term" value="F:GTPase activity"/>
    <property type="evidence" value="ECO:0000318"/>
    <property type="project" value="GO_Central"/>
</dbReference>
<dbReference type="GO" id="GO:0003746">
    <property type="term" value="F:translation elongation factor activity"/>
    <property type="evidence" value="ECO:0000318"/>
    <property type="project" value="GO_Central"/>
</dbReference>
<dbReference type="GO" id="GO:0070125">
    <property type="term" value="P:mitochondrial translational elongation"/>
    <property type="evidence" value="ECO:0000318"/>
    <property type="project" value="GO_Central"/>
</dbReference>
<dbReference type="CDD" id="cd01886">
    <property type="entry name" value="EF-G"/>
    <property type="match status" value="1"/>
</dbReference>
<dbReference type="CDD" id="cd16262">
    <property type="entry name" value="EFG_III"/>
    <property type="match status" value="1"/>
</dbReference>
<dbReference type="CDD" id="cd01434">
    <property type="entry name" value="EFG_mtEFG1_IV"/>
    <property type="match status" value="1"/>
</dbReference>
<dbReference type="CDD" id="cd04097">
    <property type="entry name" value="mtEFG1_C"/>
    <property type="match status" value="1"/>
</dbReference>
<dbReference type="CDD" id="cd04091">
    <property type="entry name" value="mtEFG1_II_like"/>
    <property type="match status" value="1"/>
</dbReference>
<dbReference type="FunFam" id="3.30.230.10:FF:000003">
    <property type="entry name" value="Elongation factor G"/>
    <property type="match status" value="1"/>
</dbReference>
<dbReference type="FunFam" id="3.30.70.870:FF:000001">
    <property type="entry name" value="Elongation factor G"/>
    <property type="match status" value="1"/>
</dbReference>
<dbReference type="FunFam" id="2.40.30.10:FF:000022">
    <property type="entry name" value="Elongation factor G, mitochondrial"/>
    <property type="match status" value="1"/>
</dbReference>
<dbReference type="FunFam" id="3.30.70.240:FF:000015">
    <property type="entry name" value="Elongation factor G, mitochondrial"/>
    <property type="match status" value="1"/>
</dbReference>
<dbReference type="FunFam" id="3.40.50.300:FF:000558">
    <property type="entry name" value="Elongation factor G, mitochondrial"/>
    <property type="match status" value="1"/>
</dbReference>
<dbReference type="Gene3D" id="3.30.230.10">
    <property type="match status" value="1"/>
</dbReference>
<dbReference type="Gene3D" id="3.30.70.240">
    <property type="match status" value="1"/>
</dbReference>
<dbReference type="Gene3D" id="3.30.70.870">
    <property type="entry name" value="Elongation Factor G (Translational Gtpase), domain 3"/>
    <property type="match status" value="1"/>
</dbReference>
<dbReference type="Gene3D" id="3.40.50.300">
    <property type="entry name" value="P-loop containing nucleotide triphosphate hydrolases"/>
    <property type="match status" value="1"/>
</dbReference>
<dbReference type="Gene3D" id="2.40.30.10">
    <property type="entry name" value="Translation factors"/>
    <property type="match status" value="1"/>
</dbReference>
<dbReference type="HAMAP" id="MF_00054_B">
    <property type="entry name" value="EF_G_EF_2_B"/>
    <property type="match status" value="1"/>
</dbReference>
<dbReference type="InterPro" id="IPR041095">
    <property type="entry name" value="EFG_II"/>
</dbReference>
<dbReference type="InterPro" id="IPR009022">
    <property type="entry name" value="EFG_III"/>
</dbReference>
<dbReference type="InterPro" id="IPR035647">
    <property type="entry name" value="EFG_III/V"/>
</dbReference>
<dbReference type="InterPro" id="IPR047872">
    <property type="entry name" value="EFG_IV"/>
</dbReference>
<dbReference type="InterPro" id="IPR035649">
    <property type="entry name" value="EFG_V"/>
</dbReference>
<dbReference type="InterPro" id="IPR000640">
    <property type="entry name" value="EFG_V-like"/>
</dbReference>
<dbReference type="InterPro" id="IPR004161">
    <property type="entry name" value="EFTu-like_2"/>
</dbReference>
<dbReference type="InterPro" id="IPR031157">
    <property type="entry name" value="G_TR_CS"/>
</dbReference>
<dbReference type="InterPro" id="IPR027417">
    <property type="entry name" value="P-loop_NTPase"/>
</dbReference>
<dbReference type="InterPro" id="IPR020568">
    <property type="entry name" value="Ribosomal_Su5_D2-typ_SF"/>
</dbReference>
<dbReference type="InterPro" id="IPR014721">
    <property type="entry name" value="Ribsml_uS5_D2-typ_fold_subgr"/>
</dbReference>
<dbReference type="InterPro" id="IPR005225">
    <property type="entry name" value="Small_GTP-bd"/>
</dbReference>
<dbReference type="InterPro" id="IPR000795">
    <property type="entry name" value="T_Tr_GTP-bd_dom"/>
</dbReference>
<dbReference type="InterPro" id="IPR009000">
    <property type="entry name" value="Transl_B-barrel_sf"/>
</dbReference>
<dbReference type="InterPro" id="IPR004540">
    <property type="entry name" value="Transl_elong_EFG/EF2"/>
</dbReference>
<dbReference type="InterPro" id="IPR005517">
    <property type="entry name" value="Transl_elong_EFG/EF2_IV"/>
</dbReference>
<dbReference type="NCBIfam" id="TIGR00484">
    <property type="entry name" value="EF-G"/>
    <property type="match status" value="1"/>
</dbReference>
<dbReference type="NCBIfam" id="NF009381">
    <property type="entry name" value="PRK12740.1-5"/>
    <property type="match status" value="1"/>
</dbReference>
<dbReference type="NCBIfam" id="TIGR00231">
    <property type="entry name" value="small_GTP"/>
    <property type="match status" value="1"/>
</dbReference>
<dbReference type="PANTHER" id="PTHR43636">
    <property type="entry name" value="ELONGATION FACTOR G, MITOCHONDRIAL"/>
    <property type="match status" value="1"/>
</dbReference>
<dbReference type="PANTHER" id="PTHR43636:SF2">
    <property type="entry name" value="ELONGATION FACTOR G, MITOCHONDRIAL"/>
    <property type="match status" value="1"/>
</dbReference>
<dbReference type="Pfam" id="PF00679">
    <property type="entry name" value="EFG_C"/>
    <property type="match status" value="1"/>
</dbReference>
<dbReference type="Pfam" id="PF14492">
    <property type="entry name" value="EFG_III"/>
    <property type="match status" value="1"/>
</dbReference>
<dbReference type="Pfam" id="PF03764">
    <property type="entry name" value="EFG_IV"/>
    <property type="match status" value="1"/>
</dbReference>
<dbReference type="Pfam" id="PF00009">
    <property type="entry name" value="GTP_EFTU"/>
    <property type="match status" value="1"/>
</dbReference>
<dbReference type="Pfam" id="PF03144">
    <property type="entry name" value="GTP_EFTU_D2"/>
    <property type="match status" value="1"/>
</dbReference>
<dbReference type="PRINTS" id="PR00315">
    <property type="entry name" value="ELONGATNFCT"/>
</dbReference>
<dbReference type="SMART" id="SM00838">
    <property type="entry name" value="EFG_C"/>
    <property type="match status" value="1"/>
</dbReference>
<dbReference type="SMART" id="SM00889">
    <property type="entry name" value="EFG_IV"/>
    <property type="match status" value="1"/>
</dbReference>
<dbReference type="SUPFAM" id="SSF54980">
    <property type="entry name" value="EF-G C-terminal domain-like"/>
    <property type="match status" value="2"/>
</dbReference>
<dbReference type="SUPFAM" id="SSF52540">
    <property type="entry name" value="P-loop containing nucleoside triphosphate hydrolases"/>
    <property type="match status" value="1"/>
</dbReference>
<dbReference type="SUPFAM" id="SSF54211">
    <property type="entry name" value="Ribosomal protein S5 domain 2-like"/>
    <property type="match status" value="1"/>
</dbReference>
<dbReference type="SUPFAM" id="SSF50447">
    <property type="entry name" value="Translation proteins"/>
    <property type="match status" value="1"/>
</dbReference>
<dbReference type="PROSITE" id="PS00301">
    <property type="entry name" value="G_TR_1"/>
    <property type="match status" value="1"/>
</dbReference>
<dbReference type="PROSITE" id="PS51722">
    <property type="entry name" value="G_TR_2"/>
    <property type="match status" value="1"/>
</dbReference>
<sequence length="804" mass="88744">MSMHRVARAVASSEACAGALRGSVSRTRFLCLNAPVQRFGARNALLGAGLGAKRHFFQSPIIRSGVAQAVLEKAAADPSALTQEAIVDNLNAAERDRLRRVRNIGIAAHIDSGKTTATERVLFYTGRINAIHEVRGKDAVGAKMDSMELEREKGITIQSAATFCDWMKVENGKEEKYHINLIDTPGHIDFTIEVERALRVLDGAVMILCAVSGVQSQTITVDRQMRRYNVPRISFINKMDRMGANPFKAVEQINQKLRIPAAALQVPIGSEDSFNGVVDLIRMKAIYNDGPKGEIIRETDEIPEELKQLCKEKRALLIETLADVDDEIAEIFLDEKTPSIEQMKAAIRRATINLKFTPVLMGSALADKSVQPMLDAVCDYLPNPAEVENLALDKRRAEAPVKLVSYNELPFVGLAFKLEESNYGQLTYIRVYQGSLRKGMNVFNARTDKRVKIPRIVRMHSNEMEEVPEIGAGEICAVFGVDCASGDTFTDGGLPYSMSSMFVPDPVISLSIKPKTTKDGSNFSKAMNRFQREDPTFRVHVDAESQETIISGMGELHLDIYVERMRREYKVEVETGKPQVAYRETITEHVTFDHTLKKQTGGAGDYARVVGFLEPIEAGPNGYAPSTFKEEVTGGSISDKFLFACEKGFLASCEKGPLLGHPVLGTHMVVNDGATHMTDSSEMAFKNATQQAFRKAFKEGKPQVLEPLMKTTITAPNEFQGNIVGLLNKRNAIISDTEIGPEDFTLIADCSLNAMFGFSSQLRAATQGKGEFGMEFSHYAPAPGQLQKELISNYEKAQADRHKK</sequence>
<feature type="transit peptide" description="Mitochondrion" evidence="1">
    <location>
        <begin position="1"/>
        <end position="63"/>
    </location>
</feature>
<feature type="chain" id="PRO_0000385584" description="Elongation factor G, mitochondrial">
    <location>
        <begin position="64"/>
        <end position="804"/>
    </location>
</feature>
<feature type="domain" description="tr-type G">
    <location>
        <begin position="99"/>
        <end position="385"/>
    </location>
</feature>
<feature type="binding site" evidence="1">
    <location>
        <begin position="108"/>
        <end position="115"/>
    </location>
    <ligand>
        <name>GTP</name>
        <dbReference type="ChEBI" id="CHEBI:37565"/>
    </ligand>
</feature>
<feature type="binding site" evidence="1">
    <location>
        <begin position="183"/>
        <end position="187"/>
    </location>
    <ligand>
        <name>GTP</name>
        <dbReference type="ChEBI" id="CHEBI:37565"/>
    </ligand>
</feature>
<feature type="binding site" evidence="1">
    <location>
        <begin position="237"/>
        <end position="240"/>
    </location>
    <ligand>
        <name>GTP</name>
        <dbReference type="ChEBI" id="CHEBI:37565"/>
    </ligand>
</feature>
<accession>A7EVV9</accession>
<keyword id="KW-0251">Elongation factor</keyword>
<keyword id="KW-0342">GTP-binding</keyword>
<keyword id="KW-0496">Mitochondrion</keyword>
<keyword id="KW-0547">Nucleotide-binding</keyword>
<keyword id="KW-0648">Protein biosynthesis</keyword>
<keyword id="KW-1185">Reference proteome</keyword>
<keyword id="KW-0809">Transit peptide</keyword>
<organism>
    <name type="scientific">Sclerotinia sclerotiorum (strain ATCC 18683 / 1980 / Ss-1)</name>
    <name type="common">White mold</name>
    <name type="synonym">Whetzelinia sclerotiorum</name>
    <dbReference type="NCBI Taxonomy" id="665079"/>
    <lineage>
        <taxon>Eukaryota</taxon>
        <taxon>Fungi</taxon>
        <taxon>Dikarya</taxon>
        <taxon>Ascomycota</taxon>
        <taxon>Pezizomycotina</taxon>
        <taxon>Leotiomycetes</taxon>
        <taxon>Helotiales</taxon>
        <taxon>Sclerotiniaceae</taxon>
        <taxon>Sclerotinia</taxon>
    </lineage>
</organism>
<reference key="1">
    <citation type="journal article" date="2011" name="PLoS Genet.">
        <title>Genomic analysis of the necrotrophic fungal pathogens Sclerotinia sclerotiorum and Botrytis cinerea.</title>
        <authorList>
            <person name="Amselem J."/>
            <person name="Cuomo C.A."/>
            <person name="van Kan J.A.L."/>
            <person name="Viaud M."/>
            <person name="Benito E.P."/>
            <person name="Couloux A."/>
            <person name="Coutinho P.M."/>
            <person name="de Vries R.P."/>
            <person name="Dyer P.S."/>
            <person name="Fillinger S."/>
            <person name="Fournier E."/>
            <person name="Gout L."/>
            <person name="Hahn M."/>
            <person name="Kohn L."/>
            <person name="Lapalu N."/>
            <person name="Plummer K.M."/>
            <person name="Pradier J.-M."/>
            <person name="Quevillon E."/>
            <person name="Sharon A."/>
            <person name="Simon A."/>
            <person name="ten Have A."/>
            <person name="Tudzynski B."/>
            <person name="Tudzynski P."/>
            <person name="Wincker P."/>
            <person name="Andrew M."/>
            <person name="Anthouard V."/>
            <person name="Beever R.E."/>
            <person name="Beffa R."/>
            <person name="Benoit I."/>
            <person name="Bouzid O."/>
            <person name="Brault B."/>
            <person name="Chen Z."/>
            <person name="Choquer M."/>
            <person name="Collemare J."/>
            <person name="Cotton P."/>
            <person name="Danchin E.G."/>
            <person name="Da Silva C."/>
            <person name="Gautier A."/>
            <person name="Giraud C."/>
            <person name="Giraud T."/>
            <person name="Gonzalez C."/>
            <person name="Grossetete S."/>
            <person name="Gueldener U."/>
            <person name="Henrissat B."/>
            <person name="Howlett B.J."/>
            <person name="Kodira C."/>
            <person name="Kretschmer M."/>
            <person name="Lappartient A."/>
            <person name="Leroch M."/>
            <person name="Levis C."/>
            <person name="Mauceli E."/>
            <person name="Neuveglise C."/>
            <person name="Oeser B."/>
            <person name="Pearson M."/>
            <person name="Poulain J."/>
            <person name="Poussereau N."/>
            <person name="Quesneville H."/>
            <person name="Rascle C."/>
            <person name="Schumacher J."/>
            <person name="Segurens B."/>
            <person name="Sexton A."/>
            <person name="Silva E."/>
            <person name="Sirven C."/>
            <person name="Soanes D.M."/>
            <person name="Talbot N.J."/>
            <person name="Templeton M."/>
            <person name="Yandava C."/>
            <person name="Yarden O."/>
            <person name="Zeng Q."/>
            <person name="Rollins J.A."/>
            <person name="Lebrun M.-H."/>
            <person name="Dickman M."/>
        </authorList>
    </citation>
    <scope>NUCLEOTIDE SEQUENCE [LARGE SCALE GENOMIC DNA]</scope>
    <source>
        <strain>ATCC 18683 / 1980 / Ss-1</strain>
    </source>
</reference>
<comment type="function">
    <text evidence="1">Mitochondrial GTPase that catalyzes the GTP-dependent ribosomal translocation step during translation elongation. During this step, the ribosome changes from the pre-translocational (PRE) to the post-translocational (POST) state as the newly formed A-site-bound peptidyl-tRNA and P-site-bound deacylated tRNA move to the P and E sites, respectively. Catalyzes the coordinated movement of the two tRNA molecules, the mRNA and conformational changes in the ribosome.</text>
</comment>
<comment type="pathway">
    <text evidence="1">Protein biosynthesis; polypeptide chain elongation.</text>
</comment>
<comment type="subcellular location">
    <subcellularLocation>
        <location evidence="1">Mitochondrion</location>
    </subcellularLocation>
</comment>
<comment type="similarity">
    <text evidence="2">Belongs to the TRAFAC class translation factor GTPase superfamily. Classic translation factor GTPase family. EF-G/EF-2 subfamily.</text>
</comment>
<protein>
    <recommendedName>
        <fullName evidence="1">Elongation factor G, mitochondrial</fullName>
        <shortName evidence="1">EF-Gmt</shortName>
    </recommendedName>
    <alternativeName>
        <fullName evidence="1">Elongation factor G 1, mitochondrial</fullName>
        <shortName evidence="1">mEF-G 1</shortName>
    </alternativeName>
    <alternativeName>
        <fullName evidence="1">Elongation factor G1</fullName>
    </alternativeName>
</protein>
<gene>
    <name type="primary">mef1</name>
    <name type="ORF">SS1G_09468</name>
</gene>